<comment type="function">
    <text evidence="1">Required for assembly of cytochrome c oxidase (complex IV). With COX14, negatively regulates COX1 translation and is involved in MSS51 association with newly synthesized COX1 (By similarity).</text>
</comment>
<comment type="subunit">
    <text evidence="1">Component of 250-400 kDa complexes called cytochrome oxidase assembly intermediates or COA complexes composed at least COA3, COX14, COX5A, SHY1 and SSC1. Interacts with COX1 and MSS51.</text>
</comment>
<comment type="subcellular location">
    <subcellularLocation>
        <location evidence="1">Mitochondrion inner membrane</location>
        <topology>Single-pass membrane protein</topology>
    </subcellularLocation>
</comment>
<comment type="similarity">
    <text evidence="3">Belongs to the COA3 family.</text>
</comment>
<sequence>MVLNPSKYQDTRTWKMTPAMIRARKPFFKGNMLGLTLLLGVTGSVYYYTYHFLHKDNDFADVPIPPIDPQELEALKKEYEAKKKA</sequence>
<proteinExistence type="inferred from homology"/>
<keyword id="KW-0472">Membrane</keyword>
<keyword id="KW-0496">Mitochondrion</keyword>
<keyword id="KW-0999">Mitochondrion inner membrane</keyword>
<keyword id="KW-0812">Transmembrane</keyword>
<keyword id="KW-1133">Transmembrane helix</keyword>
<protein>
    <recommendedName>
        <fullName>Cytochrome c oxidase assembly factor 3, mitochondrial</fullName>
    </recommendedName>
    <alternativeName>
        <fullName>Cytochrome c oxidase protein 25</fullName>
    </alternativeName>
    <alternativeName>
        <fullName>Required for respiratory growth protein 10</fullName>
    </alternativeName>
</protein>
<accession>A6ZPQ9</accession>
<dbReference type="EMBL" id="AAFW02000038">
    <property type="protein sequence ID" value="EDN63512.1"/>
    <property type="molecule type" value="Genomic_DNA"/>
</dbReference>
<dbReference type="SMR" id="A6ZPQ9"/>
<dbReference type="HOGENOM" id="CLU_153999_0_0_1"/>
<dbReference type="Proteomes" id="UP000007060">
    <property type="component" value="Unassembled WGS sequence"/>
</dbReference>
<dbReference type="GO" id="GO:0005743">
    <property type="term" value="C:mitochondrial inner membrane"/>
    <property type="evidence" value="ECO:0007669"/>
    <property type="project" value="UniProtKB-SubCell"/>
</dbReference>
<dbReference type="GO" id="GO:0033617">
    <property type="term" value="P:mitochondrial cytochrome c oxidase assembly"/>
    <property type="evidence" value="ECO:0007669"/>
    <property type="project" value="InterPro"/>
</dbReference>
<dbReference type="InterPro" id="IPR041752">
    <property type="entry name" value="Coa3"/>
</dbReference>
<dbReference type="PANTHER" id="PTHR15642:SF3">
    <property type="entry name" value="CYTOCHROME C OXIDASE ASSEMBLY FACTOR 3 HOMOLOG, MITOCHONDRIAL"/>
    <property type="match status" value="1"/>
</dbReference>
<dbReference type="PANTHER" id="PTHR15642">
    <property type="entry name" value="CYTOCHROME C OXIDASE ASSEMBLY FACTOR 3, MITOCHONDRIAL"/>
    <property type="match status" value="1"/>
</dbReference>
<reference key="1">
    <citation type="journal article" date="2007" name="Proc. Natl. Acad. Sci. U.S.A.">
        <title>Genome sequencing and comparative analysis of Saccharomyces cerevisiae strain YJM789.</title>
        <authorList>
            <person name="Wei W."/>
            <person name="McCusker J.H."/>
            <person name="Hyman R.W."/>
            <person name="Jones T."/>
            <person name="Ning Y."/>
            <person name="Cao Z."/>
            <person name="Gu Z."/>
            <person name="Bruno D."/>
            <person name="Miranda M."/>
            <person name="Nguyen M."/>
            <person name="Wilhelmy J."/>
            <person name="Komp C."/>
            <person name="Tamse R."/>
            <person name="Wang X."/>
            <person name="Jia P."/>
            <person name="Luedi P."/>
            <person name="Oefner P.J."/>
            <person name="David L."/>
            <person name="Dietrich F.S."/>
            <person name="Li Y."/>
            <person name="Davis R.W."/>
            <person name="Steinmetz L.M."/>
        </authorList>
    </citation>
    <scope>NUCLEOTIDE SEQUENCE [LARGE SCALE GENOMIC DNA]</scope>
    <source>
        <strain>YJM789</strain>
    </source>
</reference>
<gene>
    <name type="primary">COA3</name>
    <name type="synonym">COX25</name>
    <name type="synonym">RRG10</name>
    <name type="ORF">SCY_2869</name>
</gene>
<organism>
    <name type="scientific">Saccharomyces cerevisiae (strain YJM789)</name>
    <name type="common">Baker's yeast</name>
    <dbReference type="NCBI Taxonomy" id="307796"/>
    <lineage>
        <taxon>Eukaryota</taxon>
        <taxon>Fungi</taxon>
        <taxon>Dikarya</taxon>
        <taxon>Ascomycota</taxon>
        <taxon>Saccharomycotina</taxon>
        <taxon>Saccharomycetes</taxon>
        <taxon>Saccharomycetales</taxon>
        <taxon>Saccharomycetaceae</taxon>
        <taxon>Saccharomyces</taxon>
    </lineage>
</organism>
<evidence type="ECO:0000250" key="1"/>
<evidence type="ECO:0000255" key="2"/>
<evidence type="ECO:0000305" key="3"/>
<feature type="chain" id="PRO_0000405450" description="Cytochrome c oxidase assembly factor 3, mitochondrial">
    <location>
        <begin position="1"/>
        <end position="85"/>
    </location>
</feature>
<feature type="topological domain" description="Mitochondrial matrix" evidence="1">
    <location>
        <begin position="1"/>
        <end position="26"/>
    </location>
</feature>
<feature type="transmembrane region" description="Helical" evidence="2">
    <location>
        <begin position="27"/>
        <end position="49"/>
    </location>
</feature>
<feature type="topological domain" description="Mitochondrial intermembrane" evidence="1">
    <location>
        <begin position="50"/>
        <end position="85"/>
    </location>
</feature>
<name>COA3_YEAS7</name>